<gene>
    <name evidence="1" type="primary">recX</name>
    <name type="ordered locus">Pmen_3014</name>
</gene>
<sequence length="150" mass="17318">MLDNPLAVRRAAMDLLARREHGRVELTRKLRKRGAPDELIDGALDRLAEEGLLSEARYLESFVAYRARAGYGPQRIREELGQRGLARGDIDQALRDSGIDWFEQLRETWQRKYAGRLPNDARERAQQGRFLAYRGYSLDMIGRLLRGCDE</sequence>
<name>RECX_ECTM1</name>
<comment type="function">
    <text evidence="1">Modulates RecA activity.</text>
</comment>
<comment type="subcellular location">
    <subcellularLocation>
        <location evidence="1">Cytoplasm</location>
    </subcellularLocation>
</comment>
<comment type="similarity">
    <text evidence="1">Belongs to the RecX family.</text>
</comment>
<organism>
    <name type="scientific">Ectopseudomonas mendocina (strain ymp)</name>
    <name type="common">Pseudomonas mendocina</name>
    <dbReference type="NCBI Taxonomy" id="399739"/>
    <lineage>
        <taxon>Bacteria</taxon>
        <taxon>Pseudomonadati</taxon>
        <taxon>Pseudomonadota</taxon>
        <taxon>Gammaproteobacteria</taxon>
        <taxon>Pseudomonadales</taxon>
        <taxon>Pseudomonadaceae</taxon>
        <taxon>Ectopseudomonas</taxon>
    </lineage>
</organism>
<dbReference type="EMBL" id="CP000680">
    <property type="protein sequence ID" value="ABP85769.1"/>
    <property type="molecule type" value="Genomic_DNA"/>
</dbReference>
<dbReference type="SMR" id="A4XWQ3"/>
<dbReference type="STRING" id="399739.Pmen_3014"/>
<dbReference type="KEGG" id="pmy:Pmen_3014"/>
<dbReference type="eggNOG" id="COG2137">
    <property type="taxonomic scope" value="Bacteria"/>
</dbReference>
<dbReference type="HOGENOM" id="CLU_066607_3_2_6"/>
<dbReference type="GO" id="GO:0005737">
    <property type="term" value="C:cytoplasm"/>
    <property type="evidence" value="ECO:0007669"/>
    <property type="project" value="UniProtKB-SubCell"/>
</dbReference>
<dbReference type="GO" id="GO:0006282">
    <property type="term" value="P:regulation of DNA repair"/>
    <property type="evidence" value="ECO:0007669"/>
    <property type="project" value="UniProtKB-UniRule"/>
</dbReference>
<dbReference type="Gene3D" id="1.10.10.10">
    <property type="entry name" value="Winged helix-like DNA-binding domain superfamily/Winged helix DNA-binding domain"/>
    <property type="match status" value="3"/>
</dbReference>
<dbReference type="HAMAP" id="MF_01114">
    <property type="entry name" value="RecX"/>
    <property type="match status" value="1"/>
</dbReference>
<dbReference type="InterPro" id="IPR053926">
    <property type="entry name" value="RecX_HTH_1st"/>
</dbReference>
<dbReference type="InterPro" id="IPR053924">
    <property type="entry name" value="RecX_HTH_2nd"/>
</dbReference>
<dbReference type="InterPro" id="IPR053925">
    <property type="entry name" value="RecX_HTH_3rd"/>
</dbReference>
<dbReference type="InterPro" id="IPR003783">
    <property type="entry name" value="Regulatory_RecX"/>
</dbReference>
<dbReference type="InterPro" id="IPR036388">
    <property type="entry name" value="WH-like_DNA-bd_sf"/>
</dbReference>
<dbReference type="NCBIfam" id="NF001054">
    <property type="entry name" value="PRK00117.2-1"/>
    <property type="match status" value="1"/>
</dbReference>
<dbReference type="PANTHER" id="PTHR33602">
    <property type="entry name" value="REGULATORY PROTEIN RECX FAMILY PROTEIN"/>
    <property type="match status" value="1"/>
</dbReference>
<dbReference type="PANTHER" id="PTHR33602:SF1">
    <property type="entry name" value="REGULATORY PROTEIN RECX FAMILY PROTEIN"/>
    <property type="match status" value="1"/>
</dbReference>
<dbReference type="Pfam" id="PF21982">
    <property type="entry name" value="RecX_HTH1"/>
    <property type="match status" value="1"/>
</dbReference>
<dbReference type="Pfam" id="PF02631">
    <property type="entry name" value="RecX_HTH2"/>
    <property type="match status" value="1"/>
</dbReference>
<dbReference type="Pfam" id="PF21981">
    <property type="entry name" value="RecX_HTH3"/>
    <property type="match status" value="1"/>
</dbReference>
<feature type="chain" id="PRO_1000213596" description="Regulatory protein RecX">
    <location>
        <begin position="1"/>
        <end position="150"/>
    </location>
</feature>
<proteinExistence type="inferred from homology"/>
<evidence type="ECO:0000255" key="1">
    <source>
        <dbReference type="HAMAP-Rule" id="MF_01114"/>
    </source>
</evidence>
<accession>A4XWQ3</accession>
<protein>
    <recommendedName>
        <fullName evidence="1">Regulatory protein RecX</fullName>
    </recommendedName>
</protein>
<reference key="1">
    <citation type="submission" date="2007-04" db="EMBL/GenBank/DDBJ databases">
        <title>Complete sequence of Pseudomonas mendocina ymp.</title>
        <authorList>
            <consortium name="US DOE Joint Genome Institute"/>
            <person name="Copeland A."/>
            <person name="Lucas S."/>
            <person name="Lapidus A."/>
            <person name="Barry K."/>
            <person name="Glavina del Rio T."/>
            <person name="Dalin E."/>
            <person name="Tice H."/>
            <person name="Pitluck S."/>
            <person name="Kiss H."/>
            <person name="Brettin T."/>
            <person name="Detter J.C."/>
            <person name="Bruce D."/>
            <person name="Han C."/>
            <person name="Schmutz J."/>
            <person name="Larimer F."/>
            <person name="Land M."/>
            <person name="Hauser L."/>
            <person name="Kyrpides N."/>
            <person name="Mikhailova N."/>
            <person name="Hersman L."/>
            <person name="Dubois J."/>
            <person name="Maurice P."/>
            <person name="Richardson P."/>
        </authorList>
    </citation>
    <scope>NUCLEOTIDE SEQUENCE [LARGE SCALE GENOMIC DNA]</scope>
    <source>
        <strain>ymp</strain>
    </source>
</reference>
<keyword id="KW-0963">Cytoplasm</keyword>